<organism>
    <name type="scientific">Gluconacetobacter polyoxogenes</name>
    <name type="common">Acetobacter polyoxogenes</name>
    <dbReference type="NCBI Taxonomy" id="439"/>
    <lineage>
        <taxon>Bacteria</taxon>
        <taxon>Pseudomonadati</taxon>
        <taxon>Pseudomonadota</taxon>
        <taxon>Alphaproteobacteria</taxon>
        <taxon>Acetobacterales</taxon>
        <taxon>Acetobacteraceae</taxon>
        <taxon>Gluconacetobacter</taxon>
    </lineage>
</organism>
<protein>
    <recommendedName>
        <fullName evidence="1">Protein RecA</fullName>
    </recommendedName>
    <alternativeName>
        <fullName evidence="1">Recombinase A</fullName>
    </alternativeName>
</protein>
<keyword id="KW-0067">ATP-binding</keyword>
<keyword id="KW-0963">Cytoplasm</keyword>
<keyword id="KW-0227">DNA damage</keyword>
<keyword id="KW-0233">DNA recombination</keyword>
<keyword id="KW-0234">DNA repair</keyword>
<keyword id="KW-0238">DNA-binding</keyword>
<keyword id="KW-0547">Nucleotide-binding</keyword>
<keyword id="KW-0742">SOS response</keyword>
<feature type="chain" id="PRO_0000122630" description="Protein RecA">
    <location>
        <begin position="1"/>
        <end position="348"/>
    </location>
</feature>
<feature type="binding site" evidence="1">
    <location>
        <begin position="69"/>
        <end position="76"/>
    </location>
    <ligand>
        <name>ATP</name>
        <dbReference type="ChEBI" id="CHEBI:30616"/>
    </ligand>
</feature>
<evidence type="ECO:0000255" key="1">
    <source>
        <dbReference type="HAMAP-Rule" id="MF_00268"/>
    </source>
</evidence>
<gene>
    <name evidence="1" type="primary">recA</name>
</gene>
<name>RECA_GLUPO</name>
<comment type="function">
    <text evidence="1">Can catalyze the hydrolysis of ATP in the presence of single-stranded DNA, the ATP-dependent uptake of single-stranded DNA by duplex DNA, and the ATP-dependent hybridization of homologous single-stranded DNAs. It interacts with LexA causing its activation and leading to its autocatalytic cleavage.</text>
</comment>
<comment type="subcellular location">
    <subcellularLocation>
        <location evidence="1">Cytoplasm</location>
    </subcellularLocation>
</comment>
<comment type="similarity">
    <text evidence="1">Belongs to the RecA family.</text>
</comment>
<accession>Q08327</accession>
<sequence length="348" mass="37265">MAQAPGIDKSKALEGALSQIERAFGKGSIMRMGERPTEQVDVISTGSLGLDIALGIGGLPRGRIIEIYGPESSGKTTMALHAIAEAQRKGGTCAFIDAEHALDPGYARKLGVDVDNLLISQPDAGEQALEIADTLVRSGAVDVLVVDSVAALVPRAELEGDMGDSHVGLHARLMSQALRKLTGSVSRSNTMLIFLNQIRLKIGVMFGSPESTTGGNALKFYASVRMDIRRIGSIKDKDEVTGNQTRVKVVKNKMAPPFRQVEFDIMYGEGISKVGELIDLGVKAGIVEKSGAWFSCDSQRIGQGRENAKQFLRDHPEMAADIERRVREQAGVVAEAMLVGPDEDGAEH</sequence>
<reference key="1">
    <citation type="journal article" date="1993" name="Gene">
        <title>Cloning and sequencing the recA+ genes of Acetobacter polyoxogenes and Acetobacter aceti: construction of recA-mutants of by transformation-mediated gene replacement.</title>
        <authorList>
            <person name="Tayama K."/>
            <person name="Fukaya M."/>
            <person name="Takemura H."/>
            <person name="Okumura H."/>
            <person name="Kawamura Y."/>
            <person name="Horinouchi S."/>
            <person name="Beppu T."/>
        </authorList>
    </citation>
    <scope>NUCLEOTIDE SEQUENCE [GENOMIC DNA]</scope>
    <source>
        <strain>NBI1028</strain>
    </source>
</reference>
<proteinExistence type="inferred from homology"/>
<dbReference type="EMBL" id="D13183">
    <property type="protein sequence ID" value="BAA02478.1"/>
    <property type="molecule type" value="Genomic_DNA"/>
</dbReference>
<dbReference type="EMBL" id="S60629">
    <property type="protein sequence ID" value="AAC60438.1"/>
    <property type="molecule type" value="Genomic_DNA"/>
</dbReference>
<dbReference type="PIR" id="JN0639">
    <property type="entry name" value="JN0639"/>
</dbReference>
<dbReference type="SMR" id="Q08327"/>
<dbReference type="GO" id="GO:0005829">
    <property type="term" value="C:cytosol"/>
    <property type="evidence" value="ECO:0007669"/>
    <property type="project" value="TreeGrafter"/>
</dbReference>
<dbReference type="GO" id="GO:0005524">
    <property type="term" value="F:ATP binding"/>
    <property type="evidence" value="ECO:0007669"/>
    <property type="project" value="UniProtKB-UniRule"/>
</dbReference>
<dbReference type="GO" id="GO:0016887">
    <property type="term" value="F:ATP hydrolysis activity"/>
    <property type="evidence" value="ECO:0007669"/>
    <property type="project" value="InterPro"/>
</dbReference>
<dbReference type="GO" id="GO:0140664">
    <property type="term" value="F:ATP-dependent DNA damage sensor activity"/>
    <property type="evidence" value="ECO:0007669"/>
    <property type="project" value="InterPro"/>
</dbReference>
<dbReference type="GO" id="GO:0003684">
    <property type="term" value="F:damaged DNA binding"/>
    <property type="evidence" value="ECO:0007669"/>
    <property type="project" value="UniProtKB-UniRule"/>
</dbReference>
<dbReference type="GO" id="GO:0003697">
    <property type="term" value="F:single-stranded DNA binding"/>
    <property type="evidence" value="ECO:0007669"/>
    <property type="project" value="UniProtKB-UniRule"/>
</dbReference>
<dbReference type="GO" id="GO:0006310">
    <property type="term" value="P:DNA recombination"/>
    <property type="evidence" value="ECO:0007669"/>
    <property type="project" value="UniProtKB-UniRule"/>
</dbReference>
<dbReference type="GO" id="GO:0006281">
    <property type="term" value="P:DNA repair"/>
    <property type="evidence" value="ECO:0007669"/>
    <property type="project" value="UniProtKB-UniRule"/>
</dbReference>
<dbReference type="GO" id="GO:0009432">
    <property type="term" value="P:SOS response"/>
    <property type="evidence" value="ECO:0007669"/>
    <property type="project" value="UniProtKB-UniRule"/>
</dbReference>
<dbReference type="CDD" id="cd00983">
    <property type="entry name" value="RecA"/>
    <property type="match status" value="1"/>
</dbReference>
<dbReference type="FunFam" id="3.40.50.300:FF:000087">
    <property type="entry name" value="Recombinase RecA"/>
    <property type="match status" value="1"/>
</dbReference>
<dbReference type="Gene3D" id="3.40.50.300">
    <property type="entry name" value="P-loop containing nucleotide triphosphate hydrolases"/>
    <property type="match status" value="1"/>
</dbReference>
<dbReference type="HAMAP" id="MF_00268">
    <property type="entry name" value="RecA"/>
    <property type="match status" value="1"/>
</dbReference>
<dbReference type="InterPro" id="IPR003593">
    <property type="entry name" value="AAA+_ATPase"/>
</dbReference>
<dbReference type="InterPro" id="IPR013765">
    <property type="entry name" value="DNA_recomb/repair_RecA"/>
</dbReference>
<dbReference type="InterPro" id="IPR020584">
    <property type="entry name" value="DNA_recomb/repair_RecA_CS"/>
</dbReference>
<dbReference type="InterPro" id="IPR027417">
    <property type="entry name" value="P-loop_NTPase"/>
</dbReference>
<dbReference type="InterPro" id="IPR049261">
    <property type="entry name" value="RecA-like_C"/>
</dbReference>
<dbReference type="InterPro" id="IPR049428">
    <property type="entry name" value="RecA-like_N"/>
</dbReference>
<dbReference type="InterPro" id="IPR020588">
    <property type="entry name" value="RecA_ATP-bd"/>
</dbReference>
<dbReference type="InterPro" id="IPR023400">
    <property type="entry name" value="RecA_C_sf"/>
</dbReference>
<dbReference type="InterPro" id="IPR020587">
    <property type="entry name" value="RecA_monomer-monomer_interface"/>
</dbReference>
<dbReference type="NCBIfam" id="TIGR02012">
    <property type="entry name" value="tigrfam_recA"/>
    <property type="match status" value="1"/>
</dbReference>
<dbReference type="PANTHER" id="PTHR45900:SF1">
    <property type="entry name" value="MITOCHONDRIAL DNA REPAIR PROTEIN RECA HOMOLOG-RELATED"/>
    <property type="match status" value="1"/>
</dbReference>
<dbReference type="PANTHER" id="PTHR45900">
    <property type="entry name" value="RECA"/>
    <property type="match status" value="1"/>
</dbReference>
<dbReference type="Pfam" id="PF00154">
    <property type="entry name" value="RecA"/>
    <property type="match status" value="1"/>
</dbReference>
<dbReference type="Pfam" id="PF21096">
    <property type="entry name" value="RecA_C"/>
    <property type="match status" value="1"/>
</dbReference>
<dbReference type="PRINTS" id="PR00142">
    <property type="entry name" value="RECA"/>
</dbReference>
<dbReference type="SMART" id="SM00382">
    <property type="entry name" value="AAA"/>
    <property type="match status" value="1"/>
</dbReference>
<dbReference type="SUPFAM" id="SSF52540">
    <property type="entry name" value="P-loop containing nucleoside triphosphate hydrolases"/>
    <property type="match status" value="1"/>
</dbReference>
<dbReference type="SUPFAM" id="SSF54752">
    <property type="entry name" value="RecA protein, C-terminal domain"/>
    <property type="match status" value="1"/>
</dbReference>
<dbReference type="PROSITE" id="PS00321">
    <property type="entry name" value="RECA_1"/>
    <property type="match status" value="1"/>
</dbReference>
<dbReference type="PROSITE" id="PS50162">
    <property type="entry name" value="RECA_2"/>
    <property type="match status" value="1"/>
</dbReference>
<dbReference type="PROSITE" id="PS50163">
    <property type="entry name" value="RECA_3"/>
    <property type="match status" value="1"/>
</dbReference>